<accession>P0CR14</accession>
<accession>Q55N26</accession>
<accession>Q5KBF5</accession>
<reference key="1">
    <citation type="journal article" date="2005" name="Science">
        <title>The genome of the basidiomycetous yeast and human pathogen Cryptococcus neoformans.</title>
        <authorList>
            <person name="Loftus B.J."/>
            <person name="Fung E."/>
            <person name="Roncaglia P."/>
            <person name="Rowley D."/>
            <person name="Amedeo P."/>
            <person name="Bruno D."/>
            <person name="Vamathevan J."/>
            <person name="Miranda M."/>
            <person name="Anderson I.J."/>
            <person name="Fraser J.A."/>
            <person name="Allen J.E."/>
            <person name="Bosdet I.E."/>
            <person name="Brent M.R."/>
            <person name="Chiu R."/>
            <person name="Doering T.L."/>
            <person name="Donlin M.J."/>
            <person name="D'Souza C.A."/>
            <person name="Fox D.S."/>
            <person name="Grinberg V."/>
            <person name="Fu J."/>
            <person name="Fukushima M."/>
            <person name="Haas B.J."/>
            <person name="Huang J.C."/>
            <person name="Janbon G."/>
            <person name="Jones S.J.M."/>
            <person name="Koo H.L."/>
            <person name="Krzywinski M.I."/>
            <person name="Kwon-Chung K.J."/>
            <person name="Lengeler K.B."/>
            <person name="Maiti R."/>
            <person name="Marra M.A."/>
            <person name="Marra R.E."/>
            <person name="Mathewson C.A."/>
            <person name="Mitchell T.G."/>
            <person name="Pertea M."/>
            <person name="Riggs F.R."/>
            <person name="Salzberg S.L."/>
            <person name="Schein J.E."/>
            <person name="Shvartsbeyn A."/>
            <person name="Shin H."/>
            <person name="Shumway M."/>
            <person name="Specht C.A."/>
            <person name="Suh B.B."/>
            <person name="Tenney A."/>
            <person name="Utterback T.R."/>
            <person name="Wickes B.L."/>
            <person name="Wortman J.R."/>
            <person name="Wye N.H."/>
            <person name="Kronstad J.W."/>
            <person name="Lodge J.K."/>
            <person name="Heitman J."/>
            <person name="Davis R.W."/>
            <person name="Fraser C.M."/>
            <person name="Hyman R.W."/>
        </authorList>
    </citation>
    <scope>NUCLEOTIDE SEQUENCE [LARGE SCALE GENOMIC DNA]</scope>
    <source>
        <strain>JEC21 / ATCC MYA-565</strain>
    </source>
</reference>
<name>CWC2_CRYNJ</name>
<gene>
    <name type="primary">CWC2</name>
    <name type="ordered locus">CNI02720</name>
</gene>
<proteinExistence type="inferred from homology"/>
<sequence>MSSDNTVAPKRKLKPARKQVASDEVDKSQGYQAGREYNIWYNKWAGGDREDALASKVHSQTRCIISRDAGYTRADATGNKYCCLFFARGCCPYGYECQYLHRLPLPSHQLPDNSRDCFGREKHADYRDDMGGVGSFNRQNRTLYIGKIQESPDKKQMTETLLRHFGEWGKIVKYNILFGRGVAFVTYETDHQASFAKEAMANQSMDGDEILNVRWATEDPNPGEKVAEEKRIEEIGQKAIAGMLDENLVEATQAVRALEDGDVEDFYHIETSKPEEEEENRPAKKGKSEGGFFNADALDNIKFYAELAKKQAEEEKEKARKVPAKQVGMSLLGGYGSGDESD</sequence>
<organism>
    <name type="scientific">Cryptococcus neoformans var. neoformans serotype D (strain JEC21 / ATCC MYA-565)</name>
    <name type="common">Filobasidiella neoformans</name>
    <dbReference type="NCBI Taxonomy" id="214684"/>
    <lineage>
        <taxon>Eukaryota</taxon>
        <taxon>Fungi</taxon>
        <taxon>Dikarya</taxon>
        <taxon>Basidiomycota</taxon>
        <taxon>Agaricomycotina</taxon>
        <taxon>Tremellomycetes</taxon>
        <taxon>Tremellales</taxon>
        <taxon>Cryptococcaceae</taxon>
        <taxon>Cryptococcus</taxon>
        <taxon>Cryptococcus neoformans species complex</taxon>
    </lineage>
</organism>
<evidence type="ECO:0000250" key="1"/>
<evidence type="ECO:0000255" key="2">
    <source>
        <dbReference type="PROSITE-ProRule" id="PRU00176"/>
    </source>
</evidence>
<evidence type="ECO:0000255" key="3">
    <source>
        <dbReference type="PROSITE-ProRule" id="PRU00723"/>
    </source>
</evidence>
<evidence type="ECO:0000256" key="4">
    <source>
        <dbReference type="SAM" id="MobiDB-lite"/>
    </source>
</evidence>
<evidence type="ECO:0000305" key="5"/>
<dbReference type="EMBL" id="AE017349">
    <property type="protein sequence ID" value="AAW45373.1"/>
    <property type="molecule type" value="Genomic_DNA"/>
</dbReference>
<dbReference type="RefSeq" id="XP_572680.1">
    <property type="nucleotide sequence ID" value="XM_572680.1"/>
</dbReference>
<dbReference type="SMR" id="P0CR14"/>
<dbReference type="FunCoup" id="P0CR14">
    <property type="interactions" value="64"/>
</dbReference>
<dbReference type="STRING" id="214684.P0CR14"/>
<dbReference type="PaxDb" id="214684-P0CR14"/>
<dbReference type="EnsemblFungi" id="AAW45373">
    <property type="protein sequence ID" value="AAW45373"/>
    <property type="gene ID" value="CNI02720"/>
</dbReference>
<dbReference type="VEuPathDB" id="FungiDB:CNI02720"/>
<dbReference type="eggNOG" id="KOG0118">
    <property type="taxonomic scope" value="Eukaryota"/>
</dbReference>
<dbReference type="HOGENOM" id="CLU_043308_1_1_1"/>
<dbReference type="InParanoid" id="P0CR14"/>
<dbReference type="OMA" id="WYNKWSQ"/>
<dbReference type="OrthoDB" id="10251848at2759"/>
<dbReference type="Proteomes" id="UP000002149">
    <property type="component" value="Chromosome 9"/>
</dbReference>
<dbReference type="GO" id="GO:0071014">
    <property type="term" value="C:post-mRNA release spliceosomal complex"/>
    <property type="evidence" value="ECO:0007669"/>
    <property type="project" value="EnsemblFungi"/>
</dbReference>
<dbReference type="GO" id="GO:0000974">
    <property type="term" value="C:Prp19 complex"/>
    <property type="evidence" value="ECO:0000250"/>
    <property type="project" value="UniProtKB"/>
</dbReference>
<dbReference type="GO" id="GO:0071006">
    <property type="term" value="C:U2-type catalytic step 1 spliceosome"/>
    <property type="evidence" value="ECO:0000318"/>
    <property type="project" value="GO_Central"/>
</dbReference>
<dbReference type="GO" id="GO:0071007">
    <property type="term" value="C:U2-type catalytic step 2 spliceosome"/>
    <property type="evidence" value="ECO:0000318"/>
    <property type="project" value="GO_Central"/>
</dbReference>
<dbReference type="GO" id="GO:0036002">
    <property type="term" value="F:pre-mRNA binding"/>
    <property type="evidence" value="ECO:0000250"/>
    <property type="project" value="UniProtKB"/>
</dbReference>
<dbReference type="GO" id="GO:0017070">
    <property type="term" value="F:U6 snRNA binding"/>
    <property type="evidence" value="ECO:0000250"/>
    <property type="project" value="UniProtKB"/>
</dbReference>
<dbReference type="GO" id="GO:0008270">
    <property type="term" value="F:zinc ion binding"/>
    <property type="evidence" value="ECO:0007669"/>
    <property type="project" value="UniProtKB-KW"/>
</dbReference>
<dbReference type="GO" id="GO:0045292">
    <property type="term" value="P:mRNA cis splicing, via spliceosome"/>
    <property type="evidence" value="ECO:0000250"/>
    <property type="project" value="UniProtKB"/>
</dbReference>
<dbReference type="GO" id="GO:0045787">
    <property type="term" value="P:positive regulation of cell cycle"/>
    <property type="evidence" value="ECO:0000250"/>
    <property type="project" value="UniProtKB"/>
</dbReference>
<dbReference type="GO" id="GO:0033120">
    <property type="term" value="P:positive regulation of RNA splicing"/>
    <property type="evidence" value="ECO:0000250"/>
    <property type="project" value="UniProtKB"/>
</dbReference>
<dbReference type="GO" id="GO:0000387">
    <property type="term" value="P:spliceosomal snRNP assembly"/>
    <property type="evidence" value="ECO:0000250"/>
    <property type="project" value="UniProtKB"/>
</dbReference>
<dbReference type="CDD" id="cd12360">
    <property type="entry name" value="RRM_cwf2"/>
    <property type="match status" value="1"/>
</dbReference>
<dbReference type="FunFam" id="3.30.70.330:FF:000249">
    <property type="entry name" value="Pre-mRNA-splicing factor CWC2, variant"/>
    <property type="match status" value="1"/>
</dbReference>
<dbReference type="Gene3D" id="3.30.70.330">
    <property type="match status" value="1"/>
</dbReference>
<dbReference type="InterPro" id="IPR039171">
    <property type="entry name" value="Cwc2/Slt11"/>
</dbReference>
<dbReference type="InterPro" id="IPR034181">
    <property type="entry name" value="Cwc2_RRM"/>
</dbReference>
<dbReference type="InterPro" id="IPR012677">
    <property type="entry name" value="Nucleotide-bd_a/b_plait_sf"/>
</dbReference>
<dbReference type="InterPro" id="IPR035979">
    <property type="entry name" value="RBD_domain_sf"/>
</dbReference>
<dbReference type="InterPro" id="IPR000504">
    <property type="entry name" value="RRM_dom"/>
</dbReference>
<dbReference type="InterPro" id="IPR032297">
    <property type="entry name" value="Torus"/>
</dbReference>
<dbReference type="InterPro" id="IPR000571">
    <property type="entry name" value="Znf_CCCH"/>
</dbReference>
<dbReference type="PANTHER" id="PTHR14089:SF2">
    <property type="entry name" value="PRE-MRNA-SPLICING FACTOR CWC2"/>
    <property type="match status" value="1"/>
</dbReference>
<dbReference type="PANTHER" id="PTHR14089">
    <property type="entry name" value="PRE-MRNA-SPLICING FACTOR RBM22"/>
    <property type="match status" value="1"/>
</dbReference>
<dbReference type="Pfam" id="PF00076">
    <property type="entry name" value="RRM_1"/>
    <property type="match status" value="1"/>
</dbReference>
<dbReference type="Pfam" id="PF16131">
    <property type="entry name" value="Torus"/>
    <property type="match status" value="1"/>
</dbReference>
<dbReference type="SMART" id="SM00360">
    <property type="entry name" value="RRM"/>
    <property type="match status" value="1"/>
</dbReference>
<dbReference type="SUPFAM" id="SSF54928">
    <property type="entry name" value="RNA-binding domain, RBD"/>
    <property type="match status" value="1"/>
</dbReference>
<dbReference type="PROSITE" id="PS50102">
    <property type="entry name" value="RRM"/>
    <property type="match status" value="1"/>
</dbReference>
<dbReference type="PROSITE" id="PS50103">
    <property type="entry name" value="ZF_C3H1"/>
    <property type="match status" value="1"/>
</dbReference>
<comment type="function">
    <text evidence="1">Involved in the first step of pre-mRNA splicing. Required for cell growth and cell cycle control. Plays a role in the levels of the U1, U4, U5 and U6 snRNAs and the maintenance of the U4/U6 snRNA complex. May provide the link between the 'nineteen complex' NTC spliceosome protein complex and the spliceosome through the U6 snRNA. Associates predominantly with U6 snRNAs in assembled active spliceosomes. Binds directly to the internal stem-loop (ISL) domain of the U6 snRNA and to the pre-mRNA intron near the 5' splice site during the activation and catalytic phases of the spliceosome cycle (By similarity).</text>
</comment>
<comment type="subunit">
    <text evidence="1">Associated with the spliceosome.</text>
</comment>
<comment type="subcellular location">
    <subcellularLocation>
        <location evidence="1">Nucleus</location>
    </subcellularLocation>
</comment>
<comment type="domain">
    <text evidence="1">The C-terminal RRM domain and the zinc finger motif are necessary for RNA-binding.</text>
</comment>
<comment type="similarity">
    <text evidence="5">Belongs to the RRM CWC2 family.</text>
</comment>
<feature type="chain" id="PRO_0000081543" description="Pre-mRNA-splicing factor CWC2">
    <location>
        <begin position="1"/>
        <end position="342"/>
    </location>
</feature>
<feature type="domain" description="RRM" evidence="2">
    <location>
        <begin position="141"/>
        <end position="218"/>
    </location>
</feature>
<feature type="zinc finger region" description="C3H1-type" evidence="3">
    <location>
        <begin position="77"/>
        <end position="104"/>
    </location>
</feature>
<feature type="region of interest" description="Disordered" evidence="4">
    <location>
        <begin position="1"/>
        <end position="27"/>
    </location>
</feature>
<feature type="region of interest" description="Disordered" evidence="4">
    <location>
        <begin position="270"/>
        <end position="292"/>
    </location>
</feature>
<feature type="compositionally biased region" description="Basic and acidic residues" evidence="4">
    <location>
        <begin position="270"/>
        <end position="288"/>
    </location>
</feature>
<protein>
    <recommendedName>
        <fullName>Pre-mRNA-splicing factor CWC2</fullName>
    </recommendedName>
</protein>
<keyword id="KW-0131">Cell cycle</keyword>
<keyword id="KW-0479">Metal-binding</keyword>
<keyword id="KW-0507">mRNA processing</keyword>
<keyword id="KW-0508">mRNA splicing</keyword>
<keyword id="KW-0539">Nucleus</keyword>
<keyword id="KW-1185">Reference proteome</keyword>
<keyword id="KW-0694">RNA-binding</keyword>
<keyword id="KW-0747">Spliceosome</keyword>
<keyword id="KW-0862">Zinc</keyword>
<keyword id="KW-0863">Zinc-finger</keyword>